<dbReference type="EMBL" id="AF054826">
    <property type="protein sequence ID" value="AAC97474.1"/>
    <property type="molecule type" value="mRNA"/>
</dbReference>
<dbReference type="RefSeq" id="NP_446007.1">
    <property type="nucleotide sequence ID" value="NM_053555.2"/>
</dbReference>
<dbReference type="SMR" id="Q9Z2J5"/>
<dbReference type="BioGRID" id="250141">
    <property type="interactions" value="1"/>
</dbReference>
<dbReference type="FunCoup" id="Q9Z2J5">
    <property type="interactions" value="140"/>
</dbReference>
<dbReference type="STRING" id="10116.ENSRNOP00000016984"/>
<dbReference type="iPTMnet" id="Q9Z2J5"/>
<dbReference type="PhosphoSitePlus" id="Q9Z2J5"/>
<dbReference type="SwissPalm" id="Q9Z2J5"/>
<dbReference type="PaxDb" id="10116-ENSRNOP00000016984"/>
<dbReference type="GeneID" id="89818"/>
<dbReference type="KEGG" id="rno:89818"/>
<dbReference type="UCSC" id="RGD:620419">
    <property type="organism name" value="rat"/>
</dbReference>
<dbReference type="AGR" id="RGD:620419"/>
<dbReference type="CTD" id="10791"/>
<dbReference type="RGD" id="620419">
    <property type="gene designation" value="Vamp5"/>
</dbReference>
<dbReference type="eggNOG" id="KOG0860">
    <property type="taxonomic scope" value="Eukaryota"/>
</dbReference>
<dbReference type="HOGENOM" id="CLU_064620_4_2_1"/>
<dbReference type="InParanoid" id="Q9Z2J5"/>
<dbReference type="OrthoDB" id="190375at2759"/>
<dbReference type="PhylomeDB" id="Q9Z2J5"/>
<dbReference type="PRO" id="PR:Q9Z2J5"/>
<dbReference type="Proteomes" id="UP000002494">
    <property type="component" value="Unplaced"/>
</dbReference>
<dbReference type="GO" id="GO:0009986">
    <property type="term" value="C:cell surface"/>
    <property type="evidence" value="ECO:0000266"/>
    <property type="project" value="RGD"/>
</dbReference>
<dbReference type="GO" id="GO:0030659">
    <property type="term" value="C:cytoplasmic vesicle membrane"/>
    <property type="evidence" value="ECO:0000266"/>
    <property type="project" value="RGD"/>
</dbReference>
<dbReference type="GO" id="GO:0014704">
    <property type="term" value="C:intercalated disc"/>
    <property type="evidence" value="ECO:0000266"/>
    <property type="project" value="RGD"/>
</dbReference>
<dbReference type="GO" id="GO:0005770">
    <property type="term" value="C:late endosome"/>
    <property type="evidence" value="ECO:0000266"/>
    <property type="project" value="RGD"/>
</dbReference>
<dbReference type="GO" id="GO:0031090">
    <property type="term" value="C:organelle membrane"/>
    <property type="evidence" value="ECO:0000266"/>
    <property type="project" value="RGD"/>
</dbReference>
<dbReference type="GO" id="GO:0048471">
    <property type="term" value="C:perinuclear region of cytoplasm"/>
    <property type="evidence" value="ECO:0000266"/>
    <property type="project" value="RGD"/>
</dbReference>
<dbReference type="GO" id="GO:0005886">
    <property type="term" value="C:plasma membrane"/>
    <property type="evidence" value="ECO:0000266"/>
    <property type="project" value="RGD"/>
</dbReference>
<dbReference type="GO" id="GO:0005802">
    <property type="term" value="C:trans-Golgi network"/>
    <property type="evidence" value="ECO:0000314"/>
    <property type="project" value="RGD"/>
</dbReference>
<dbReference type="GO" id="GO:0030154">
    <property type="term" value="P:cell differentiation"/>
    <property type="evidence" value="ECO:0007669"/>
    <property type="project" value="UniProtKB-KW"/>
</dbReference>
<dbReference type="GO" id="GO:0043001">
    <property type="term" value="P:Golgi to plasma membrane protein transport"/>
    <property type="evidence" value="ECO:0000266"/>
    <property type="project" value="RGD"/>
</dbReference>
<dbReference type="GO" id="GO:0007519">
    <property type="term" value="P:skeletal muscle tissue development"/>
    <property type="evidence" value="ECO:0000266"/>
    <property type="project" value="RGD"/>
</dbReference>
<dbReference type="CDD" id="cd15872">
    <property type="entry name" value="R-SNARE_VAMP5"/>
    <property type="match status" value="1"/>
</dbReference>
<dbReference type="FunFam" id="1.20.5.110:FF:000064">
    <property type="entry name" value="Vesicle associated membrane protein 5"/>
    <property type="match status" value="1"/>
</dbReference>
<dbReference type="Gene3D" id="1.20.5.110">
    <property type="match status" value="1"/>
</dbReference>
<dbReference type="InterPro" id="IPR001388">
    <property type="entry name" value="Synaptobrevin-like"/>
</dbReference>
<dbReference type="InterPro" id="IPR016444">
    <property type="entry name" value="Synaptobrevin/VAMP"/>
</dbReference>
<dbReference type="InterPro" id="IPR042855">
    <property type="entry name" value="V_SNARE_CC"/>
</dbReference>
<dbReference type="InterPro" id="IPR042166">
    <property type="entry name" value="Vamp5"/>
</dbReference>
<dbReference type="InterPro" id="IPR042581">
    <property type="entry name" value="VAMP5_R-SNARE"/>
</dbReference>
<dbReference type="PANTHER" id="PTHR47462">
    <property type="entry name" value="VESICLE-ASSOCIATED MEMBRANE PROTEIN 5"/>
    <property type="match status" value="1"/>
</dbReference>
<dbReference type="PANTHER" id="PTHR47462:SF1">
    <property type="entry name" value="VESICLE-ASSOCIATED MEMBRANE PROTEIN 5"/>
    <property type="match status" value="1"/>
</dbReference>
<dbReference type="Pfam" id="PF00957">
    <property type="entry name" value="Synaptobrevin"/>
    <property type="match status" value="1"/>
</dbReference>
<dbReference type="PIRSF" id="PIRSF005409">
    <property type="entry name" value="Synaptobrevin_euk"/>
    <property type="match status" value="1"/>
</dbReference>
<dbReference type="PRINTS" id="PR00219">
    <property type="entry name" value="SYNAPTOBREVN"/>
</dbReference>
<dbReference type="SUPFAM" id="SSF58038">
    <property type="entry name" value="SNARE fusion complex"/>
    <property type="match status" value="1"/>
</dbReference>
<dbReference type="PROSITE" id="PS00417">
    <property type="entry name" value="SYNAPTOBREVIN"/>
    <property type="match status" value="1"/>
</dbReference>
<dbReference type="PROSITE" id="PS50892">
    <property type="entry name" value="V_SNARE"/>
    <property type="match status" value="1"/>
</dbReference>
<proteinExistence type="evidence at transcript level"/>
<keyword id="KW-1003">Cell membrane</keyword>
<keyword id="KW-0175">Coiled coil</keyword>
<keyword id="KW-0217">Developmental protein</keyword>
<keyword id="KW-0221">Differentiation</keyword>
<keyword id="KW-0333">Golgi apparatus</keyword>
<keyword id="KW-0472">Membrane</keyword>
<keyword id="KW-0517">Myogenesis</keyword>
<keyword id="KW-0597">Phosphoprotein</keyword>
<keyword id="KW-1185">Reference proteome</keyword>
<keyword id="KW-0812">Transmembrane</keyword>
<keyword id="KW-1133">Transmembrane helix</keyword>
<sequence>MAGKELERCQRQADQVTEIMLNNFDKVLERDGKLSELQQRSDQLLDMSSAFSKTTKTLAQQKRWENIRCRVYLGLAVAGGLLLILVVLLVIFLPSGEDSSKP</sequence>
<gene>
    <name type="primary">Vamp5</name>
</gene>
<evidence type="ECO:0000250" key="1"/>
<evidence type="ECO:0000250" key="2">
    <source>
        <dbReference type="UniProtKB" id="O95183"/>
    </source>
</evidence>
<evidence type="ECO:0000250" key="3">
    <source>
        <dbReference type="UniProtKB" id="Q9Z2P8"/>
    </source>
</evidence>
<evidence type="ECO:0000255" key="4"/>
<evidence type="ECO:0000255" key="5">
    <source>
        <dbReference type="PROSITE-ProRule" id="PRU00290"/>
    </source>
</evidence>
<evidence type="ECO:0000305" key="6"/>
<comment type="function">
    <text>May participate in trafficking events that are associated with myogenesis, such as myoblast fusion and/or GLUT4 trafficking.</text>
</comment>
<comment type="subcellular location">
    <subcellularLocation>
        <location evidence="6">Cell membrane</location>
        <topology evidence="6">Single-pass type IV membrane protein</topology>
    </subcellularLocation>
    <subcellularLocation>
        <location evidence="6">Endomembrane system</location>
        <topology evidence="6">Single-pass type IV membrane protein</topology>
    </subcellularLocation>
    <subcellularLocation>
        <location evidence="6">Golgi apparatus</location>
        <location evidence="6">trans-Golgi network membrane</location>
        <topology evidence="6">Single-pass type IV membrane protein</topology>
    </subcellularLocation>
    <text evidence="1">Associated with the plasma membrane as well as intracellular perinuclear and peripheral vesicular structures of myotubes. Associated with the trans-Golgi, but not with the cis-Golgi apparatus (By similarity).</text>
</comment>
<comment type="induction">
    <text>During myogenesis.</text>
</comment>
<comment type="similarity">
    <text evidence="6">Belongs to the synaptobrevin family.</text>
</comment>
<organism>
    <name type="scientific">Rattus norvegicus</name>
    <name type="common">Rat</name>
    <dbReference type="NCBI Taxonomy" id="10116"/>
    <lineage>
        <taxon>Eukaryota</taxon>
        <taxon>Metazoa</taxon>
        <taxon>Chordata</taxon>
        <taxon>Craniata</taxon>
        <taxon>Vertebrata</taxon>
        <taxon>Euteleostomi</taxon>
        <taxon>Mammalia</taxon>
        <taxon>Eutheria</taxon>
        <taxon>Euarchontoglires</taxon>
        <taxon>Glires</taxon>
        <taxon>Rodentia</taxon>
        <taxon>Myomorpha</taxon>
        <taxon>Muroidea</taxon>
        <taxon>Muridae</taxon>
        <taxon>Murinae</taxon>
        <taxon>Rattus</taxon>
    </lineage>
</organism>
<name>VAMP5_RAT</name>
<accession>Q9Z2J5</accession>
<reference key="1">
    <citation type="journal article" date="1998" name="Mol. Biol. Cell">
        <title>A novel synaptobrevin/VAMP homologous protein (VAMP5) is increased during in vitro myogenesis and present in the plasma membrane.</title>
        <authorList>
            <person name="Zeng Q."/>
            <person name="Subramaniam V.N."/>
            <person name="Wong S.H."/>
            <person name="Tang B.L."/>
            <person name="Parton R.G."/>
            <person name="Rea S."/>
            <person name="James D.E."/>
            <person name="Hong W."/>
        </authorList>
    </citation>
    <scope>NUCLEOTIDE SEQUENCE [MRNA]</scope>
</reference>
<protein>
    <recommendedName>
        <fullName>Vesicle-associated membrane protein 5</fullName>
        <shortName>VAMP-5</shortName>
    </recommendedName>
    <alternativeName>
        <fullName>Myobrevin</fullName>
    </alternativeName>
</protein>
<feature type="chain" id="PRO_0000206735" description="Vesicle-associated membrane protein 5">
    <location>
        <begin position="1"/>
        <end position="102"/>
    </location>
</feature>
<feature type="topological domain" description="Cytoplasmic" evidence="4">
    <location>
        <begin position="1"/>
        <end position="72"/>
    </location>
</feature>
<feature type="transmembrane region" description="Helical; Anchor for type IV membrane protein" evidence="4">
    <location>
        <begin position="73"/>
        <end position="93"/>
    </location>
</feature>
<feature type="topological domain" description="Vesicular" evidence="4">
    <location>
        <begin position="94"/>
        <end position="102"/>
    </location>
</feature>
<feature type="domain" description="v-SNARE coiled-coil homology" evidence="5">
    <location>
        <begin position="5"/>
        <end position="65"/>
    </location>
</feature>
<feature type="modified residue" description="Phosphoserine" evidence="3">
    <location>
        <position position="41"/>
    </location>
</feature>
<feature type="modified residue" description="Phosphoserine" evidence="2">
    <location>
        <position position="48"/>
    </location>
</feature>
<feature type="modified residue" description="Phosphoserine" evidence="2">
    <location>
        <position position="49"/>
    </location>
</feature>